<keyword id="KW-0997">Cell inner membrane</keyword>
<keyword id="KW-1003">Cell membrane</keyword>
<keyword id="KW-0143">Chaperone</keyword>
<keyword id="KW-0472">Membrane</keyword>
<keyword id="KW-0653">Protein transport</keyword>
<keyword id="KW-0812">Transmembrane</keyword>
<keyword id="KW-1133">Transmembrane helix</keyword>
<keyword id="KW-0813">Transport</keyword>
<evidence type="ECO:0000255" key="1">
    <source>
        <dbReference type="HAMAP-Rule" id="MF_01810"/>
    </source>
</evidence>
<name>YIDC_PORG3</name>
<organism>
    <name type="scientific">Porphyromonas gingivalis (strain ATCC 33277 / DSM 20709 / CIP 103683 / JCM 12257 / NCTC 11834 / 2561)</name>
    <dbReference type="NCBI Taxonomy" id="431947"/>
    <lineage>
        <taxon>Bacteria</taxon>
        <taxon>Pseudomonadati</taxon>
        <taxon>Bacteroidota</taxon>
        <taxon>Bacteroidia</taxon>
        <taxon>Bacteroidales</taxon>
        <taxon>Porphyromonadaceae</taxon>
        <taxon>Porphyromonas</taxon>
    </lineage>
</organism>
<feature type="chain" id="PRO_1000187688" description="Membrane protein insertase YidC">
    <location>
        <begin position="1"/>
        <end position="627"/>
    </location>
</feature>
<feature type="transmembrane region" description="Helical" evidence="1">
    <location>
        <begin position="3"/>
        <end position="23"/>
    </location>
</feature>
<feature type="transmembrane region" description="Helical" evidence="1">
    <location>
        <begin position="376"/>
        <end position="396"/>
    </location>
</feature>
<feature type="transmembrane region" description="Helical" evidence="1">
    <location>
        <begin position="450"/>
        <end position="470"/>
    </location>
</feature>
<feature type="transmembrane region" description="Helical" evidence="1">
    <location>
        <begin position="502"/>
        <end position="522"/>
    </location>
</feature>
<feature type="transmembrane region" description="Helical" evidence="1">
    <location>
        <begin position="534"/>
        <end position="554"/>
    </location>
</feature>
<feature type="transmembrane region" description="Helical" evidence="1">
    <location>
        <begin position="558"/>
        <end position="578"/>
    </location>
</feature>
<proteinExistence type="inferred from homology"/>
<protein>
    <recommendedName>
        <fullName evidence="1">Membrane protein insertase YidC</fullName>
    </recommendedName>
    <alternativeName>
        <fullName evidence="1">Foldase YidC</fullName>
    </alternativeName>
    <alternativeName>
        <fullName evidence="1">Membrane integrase YidC</fullName>
    </alternativeName>
    <alternativeName>
        <fullName evidence="1">Membrane protein YidC</fullName>
    </alternativeName>
</protein>
<sequence length="627" mass="72031">MDKNTVIGLVLIGLVIFGFSWLNRPDPQEIEAQRKAAIEAARQDSIAKAEAELLAARTQEATPDSIKQAAGYNQYGLLAAATAGAEEQVELANGKIALKLSTKGGAIREVLLRDYKTYDGKPLYLFREGESDFNLPLRTLDNRLVDTRDLYFSPISRTDSSVVMRLAVDSASYLDLAYVLLPDDYRLRMTVSGQNLQSLFPANMTMQDLEWSQRIRRQEKSWKFENQYTSIYYKYSGDEVDRLSDSKQEDKKTLEEPLHWVSFKDKYFASVLVCDSYFENNKLAQKTAAAGSDYLKNCTMSATFPLDVRPGTKAGFTFFFGPLKYNMLRAYDKGMKAEDNLDLDHLVYLGASIFRWINRYMIIPASTFLQQYFSNWGLIILLLTLGIKLLISPLAYKGYLSSAKMRLLRPQVQEINAKYPGKDQESMMKRQSATMNLYRAAGAGPMSGCLPMLLQFPFLIAMYMYFPTTIDIRQQSFLWAEDLSSYDAVFSWTADIPLLSQFYGNHVSLFCLLMSISNILYIRYTMNQSDTGQEGMAMLKWMPYITTVMFLFFFNQNASGLCYYYFLSSIITVIQYMSSRFIINEEKLMAKLEANKTKPRKKSKWMARLEEAQRQQEAMRRQQQKRK</sequence>
<gene>
    <name evidence="1" type="primary">yidC</name>
    <name type="ordered locus">PGN_1446</name>
</gene>
<dbReference type="EMBL" id="AP009380">
    <property type="protein sequence ID" value="BAG33965.1"/>
    <property type="molecule type" value="Genomic_DNA"/>
</dbReference>
<dbReference type="RefSeq" id="WP_012458276.1">
    <property type="nucleotide sequence ID" value="NC_010729.1"/>
</dbReference>
<dbReference type="GeneID" id="29256631"/>
<dbReference type="KEGG" id="pgn:PGN_1446"/>
<dbReference type="eggNOG" id="COG0706">
    <property type="taxonomic scope" value="Bacteria"/>
</dbReference>
<dbReference type="HOGENOM" id="CLU_016535_2_0_10"/>
<dbReference type="OrthoDB" id="9780552at2"/>
<dbReference type="BioCyc" id="PGIN431947:G1G2V-1648-MONOMER"/>
<dbReference type="Proteomes" id="UP000008842">
    <property type="component" value="Chromosome"/>
</dbReference>
<dbReference type="GO" id="GO:0005886">
    <property type="term" value="C:plasma membrane"/>
    <property type="evidence" value="ECO:0007669"/>
    <property type="project" value="UniProtKB-SubCell"/>
</dbReference>
<dbReference type="GO" id="GO:0032977">
    <property type="term" value="F:membrane insertase activity"/>
    <property type="evidence" value="ECO:0007669"/>
    <property type="project" value="InterPro"/>
</dbReference>
<dbReference type="GO" id="GO:0051205">
    <property type="term" value="P:protein insertion into membrane"/>
    <property type="evidence" value="ECO:0007669"/>
    <property type="project" value="TreeGrafter"/>
</dbReference>
<dbReference type="GO" id="GO:0015031">
    <property type="term" value="P:protein transport"/>
    <property type="evidence" value="ECO:0007669"/>
    <property type="project" value="UniProtKB-KW"/>
</dbReference>
<dbReference type="CDD" id="cd20070">
    <property type="entry name" value="5TM_YidC_Alb3"/>
    <property type="match status" value="1"/>
</dbReference>
<dbReference type="CDD" id="cd19961">
    <property type="entry name" value="EcYidC-like_peri"/>
    <property type="match status" value="1"/>
</dbReference>
<dbReference type="Gene3D" id="2.70.98.90">
    <property type="match status" value="1"/>
</dbReference>
<dbReference type="HAMAP" id="MF_01810">
    <property type="entry name" value="YidC_type1"/>
    <property type="match status" value="1"/>
</dbReference>
<dbReference type="InterPro" id="IPR019998">
    <property type="entry name" value="Membr_insert_YidC"/>
</dbReference>
<dbReference type="InterPro" id="IPR028053">
    <property type="entry name" value="Membr_insert_YidC_N"/>
</dbReference>
<dbReference type="InterPro" id="IPR001708">
    <property type="entry name" value="YidC/ALB3/OXA1/COX18"/>
</dbReference>
<dbReference type="InterPro" id="IPR028055">
    <property type="entry name" value="YidC/Oxa/ALB_C"/>
</dbReference>
<dbReference type="InterPro" id="IPR047196">
    <property type="entry name" value="YidC_ALB_C"/>
</dbReference>
<dbReference type="InterPro" id="IPR038221">
    <property type="entry name" value="YidC_periplasmic_sf"/>
</dbReference>
<dbReference type="NCBIfam" id="NF002356">
    <property type="entry name" value="PRK01318.2-3"/>
    <property type="match status" value="1"/>
</dbReference>
<dbReference type="NCBIfam" id="TIGR03593">
    <property type="entry name" value="yidC_nterm"/>
    <property type="match status" value="1"/>
</dbReference>
<dbReference type="NCBIfam" id="TIGR03592">
    <property type="entry name" value="yidC_oxa1_cterm"/>
    <property type="match status" value="1"/>
</dbReference>
<dbReference type="PANTHER" id="PTHR12428:SF65">
    <property type="entry name" value="CYTOCHROME C OXIDASE ASSEMBLY PROTEIN COX18, MITOCHONDRIAL"/>
    <property type="match status" value="1"/>
</dbReference>
<dbReference type="PANTHER" id="PTHR12428">
    <property type="entry name" value="OXA1"/>
    <property type="match status" value="1"/>
</dbReference>
<dbReference type="Pfam" id="PF02096">
    <property type="entry name" value="60KD_IMP"/>
    <property type="match status" value="1"/>
</dbReference>
<dbReference type="Pfam" id="PF14849">
    <property type="entry name" value="YidC_periplas"/>
    <property type="match status" value="1"/>
</dbReference>
<dbReference type="PRINTS" id="PR00701">
    <property type="entry name" value="60KDINNERMP"/>
</dbReference>
<comment type="function">
    <text evidence="1">Required for the insertion and/or proper folding and/or complex formation of integral membrane proteins into the membrane. Involved in integration of membrane proteins that insert both dependently and independently of the Sec translocase complex, as well as at least some lipoproteins. Aids folding of multispanning membrane proteins.</text>
</comment>
<comment type="subunit">
    <text evidence="1">Interacts with the Sec translocase complex via SecD. Specifically interacts with transmembrane segments of nascent integral membrane proteins during membrane integration.</text>
</comment>
<comment type="subcellular location">
    <subcellularLocation>
        <location evidence="1">Cell inner membrane</location>
        <topology evidence="1">Multi-pass membrane protein</topology>
    </subcellularLocation>
</comment>
<comment type="similarity">
    <text evidence="1">Belongs to the OXA1/ALB3/YidC family. Type 1 subfamily.</text>
</comment>
<accession>B2RKS0</accession>
<reference key="1">
    <citation type="journal article" date="2008" name="DNA Res.">
        <title>Determination of the genome sequence of Porphyromonas gingivalis strain ATCC 33277 and genomic comparison with strain W83 revealed extensive genome rearrangements in P. gingivalis.</title>
        <authorList>
            <person name="Naito M."/>
            <person name="Hirakawa H."/>
            <person name="Yamashita A."/>
            <person name="Ohara N."/>
            <person name="Shoji M."/>
            <person name="Yukitake H."/>
            <person name="Nakayama K."/>
            <person name="Toh H."/>
            <person name="Yoshimura F."/>
            <person name="Kuhara S."/>
            <person name="Hattori M."/>
            <person name="Hayashi T."/>
            <person name="Nakayama K."/>
        </authorList>
    </citation>
    <scope>NUCLEOTIDE SEQUENCE [LARGE SCALE GENOMIC DNA]</scope>
    <source>
        <strain>ATCC 33277 / DSM 20709 / CIP 103683 / JCM 12257 / NCTC 11834 / 2561</strain>
    </source>
</reference>